<gene>
    <name evidence="1" type="primary">rplQ</name>
    <name type="ordered locus">BDI_2353</name>
</gene>
<name>RL17_PARD8</name>
<dbReference type="EMBL" id="CP000140">
    <property type="protein sequence ID" value="ABR44078.1"/>
    <property type="molecule type" value="Genomic_DNA"/>
</dbReference>
<dbReference type="RefSeq" id="WP_005854016.1">
    <property type="nucleotide sequence ID" value="NZ_LR215978.1"/>
</dbReference>
<dbReference type="SMR" id="A6LEG4"/>
<dbReference type="STRING" id="435591.BDI_2353"/>
<dbReference type="PaxDb" id="435591-BDI_2353"/>
<dbReference type="KEGG" id="pdi:BDI_2353"/>
<dbReference type="eggNOG" id="COG0203">
    <property type="taxonomic scope" value="Bacteria"/>
</dbReference>
<dbReference type="HOGENOM" id="CLU_074407_0_1_10"/>
<dbReference type="BioCyc" id="PDIS435591:G1G5A-2417-MONOMER"/>
<dbReference type="Proteomes" id="UP000000566">
    <property type="component" value="Chromosome"/>
</dbReference>
<dbReference type="GO" id="GO:0022625">
    <property type="term" value="C:cytosolic large ribosomal subunit"/>
    <property type="evidence" value="ECO:0007669"/>
    <property type="project" value="TreeGrafter"/>
</dbReference>
<dbReference type="GO" id="GO:0003735">
    <property type="term" value="F:structural constituent of ribosome"/>
    <property type="evidence" value="ECO:0007669"/>
    <property type="project" value="InterPro"/>
</dbReference>
<dbReference type="GO" id="GO:0006412">
    <property type="term" value="P:translation"/>
    <property type="evidence" value="ECO:0007669"/>
    <property type="project" value="UniProtKB-UniRule"/>
</dbReference>
<dbReference type="FunFam" id="3.90.1030.10:FF:000006">
    <property type="entry name" value="50S ribosomal protein L17"/>
    <property type="match status" value="1"/>
</dbReference>
<dbReference type="Gene3D" id="3.90.1030.10">
    <property type="entry name" value="Ribosomal protein L17"/>
    <property type="match status" value="1"/>
</dbReference>
<dbReference type="HAMAP" id="MF_01368">
    <property type="entry name" value="Ribosomal_bL17"/>
    <property type="match status" value="1"/>
</dbReference>
<dbReference type="InterPro" id="IPR000456">
    <property type="entry name" value="Ribosomal_bL17"/>
</dbReference>
<dbReference type="InterPro" id="IPR047859">
    <property type="entry name" value="Ribosomal_bL17_CS"/>
</dbReference>
<dbReference type="InterPro" id="IPR036373">
    <property type="entry name" value="Ribosomal_bL17_sf"/>
</dbReference>
<dbReference type="NCBIfam" id="TIGR00059">
    <property type="entry name" value="L17"/>
    <property type="match status" value="1"/>
</dbReference>
<dbReference type="PANTHER" id="PTHR14413:SF16">
    <property type="entry name" value="LARGE RIBOSOMAL SUBUNIT PROTEIN BL17M"/>
    <property type="match status" value="1"/>
</dbReference>
<dbReference type="PANTHER" id="PTHR14413">
    <property type="entry name" value="RIBOSOMAL PROTEIN L17"/>
    <property type="match status" value="1"/>
</dbReference>
<dbReference type="Pfam" id="PF01196">
    <property type="entry name" value="Ribosomal_L17"/>
    <property type="match status" value="1"/>
</dbReference>
<dbReference type="SUPFAM" id="SSF64263">
    <property type="entry name" value="Prokaryotic ribosomal protein L17"/>
    <property type="match status" value="1"/>
</dbReference>
<dbReference type="PROSITE" id="PS01167">
    <property type="entry name" value="RIBOSOMAL_L17"/>
    <property type="match status" value="1"/>
</dbReference>
<keyword id="KW-1185">Reference proteome</keyword>
<keyword id="KW-0687">Ribonucleoprotein</keyword>
<keyword id="KW-0689">Ribosomal protein</keyword>
<reference key="1">
    <citation type="journal article" date="2007" name="PLoS Biol.">
        <title>Evolution of symbiotic bacteria in the distal human intestine.</title>
        <authorList>
            <person name="Xu J."/>
            <person name="Mahowald M.A."/>
            <person name="Ley R.E."/>
            <person name="Lozupone C.A."/>
            <person name="Hamady M."/>
            <person name="Martens E.C."/>
            <person name="Henrissat B."/>
            <person name="Coutinho P.M."/>
            <person name="Minx P."/>
            <person name="Latreille P."/>
            <person name="Cordum H."/>
            <person name="Van Brunt A."/>
            <person name="Kim K."/>
            <person name="Fulton R.S."/>
            <person name="Fulton L.A."/>
            <person name="Clifton S.W."/>
            <person name="Wilson R.K."/>
            <person name="Knight R.D."/>
            <person name="Gordon J.I."/>
        </authorList>
    </citation>
    <scope>NUCLEOTIDE SEQUENCE [LARGE SCALE GENOMIC DNA]</scope>
    <source>
        <strain>ATCC 8503 / DSM 20701 / CIP 104284 / JCM 5825 / NCTC 11152</strain>
    </source>
</reference>
<proteinExistence type="inferred from homology"/>
<comment type="subunit">
    <text evidence="1">Part of the 50S ribosomal subunit. Contacts protein L32.</text>
</comment>
<comment type="similarity">
    <text evidence="1">Belongs to the bacterial ribosomal protein bL17 family.</text>
</comment>
<protein>
    <recommendedName>
        <fullName evidence="1">Large ribosomal subunit protein bL17</fullName>
    </recommendedName>
    <alternativeName>
        <fullName evidence="3">50S ribosomal protein L17</fullName>
    </alternativeName>
</protein>
<feature type="chain" id="PRO_1000055898" description="Large ribosomal subunit protein bL17">
    <location>
        <begin position="1"/>
        <end position="161"/>
    </location>
</feature>
<feature type="region of interest" description="Disordered" evidence="2">
    <location>
        <begin position="126"/>
        <end position="161"/>
    </location>
</feature>
<feature type="compositionally biased region" description="Basic residues" evidence="2">
    <location>
        <begin position="130"/>
        <end position="141"/>
    </location>
</feature>
<feature type="compositionally biased region" description="Low complexity" evidence="2">
    <location>
        <begin position="142"/>
        <end position="153"/>
    </location>
</feature>
<organism>
    <name type="scientific">Parabacteroides distasonis (strain ATCC 8503 / DSM 20701 / CIP 104284 / JCM 5825 / NCTC 11152)</name>
    <dbReference type="NCBI Taxonomy" id="435591"/>
    <lineage>
        <taxon>Bacteria</taxon>
        <taxon>Pseudomonadati</taxon>
        <taxon>Bacteroidota</taxon>
        <taxon>Bacteroidia</taxon>
        <taxon>Bacteroidales</taxon>
        <taxon>Tannerellaceae</taxon>
        <taxon>Parabacteroides</taxon>
    </lineage>
</organism>
<sequence>MRHNKKFNHLGRTNTHRDAMLSNMACSLIKHKRIFTTTAKAKALRKYVEPLITKSKEDTTHSRRVVFSNLQDKFAVTELFKEIAQKIGDRPGGYTRIIKTGNRLGDNAAMCFIELVDYNENMLKDTAAKKAPKTRRSRKKATASVAEAPTAEAASEEKAAE</sequence>
<accession>A6LEG4</accession>
<evidence type="ECO:0000255" key="1">
    <source>
        <dbReference type="HAMAP-Rule" id="MF_01368"/>
    </source>
</evidence>
<evidence type="ECO:0000256" key="2">
    <source>
        <dbReference type="SAM" id="MobiDB-lite"/>
    </source>
</evidence>
<evidence type="ECO:0000305" key="3"/>